<keyword id="KW-1185">Reference proteome</keyword>
<organism>
    <name type="scientific">Shigella flexneri</name>
    <dbReference type="NCBI Taxonomy" id="623"/>
    <lineage>
        <taxon>Bacteria</taxon>
        <taxon>Pseudomonadati</taxon>
        <taxon>Pseudomonadota</taxon>
        <taxon>Gammaproteobacteria</taxon>
        <taxon>Enterobacterales</taxon>
        <taxon>Enterobacteriaceae</taxon>
        <taxon>Shigella</taxon>
    </lineage>
</organism>
<name>YK9B_SHIFL</name>
<proteinExistence type="predicted"/>
<sequence length="119" mass="13766">MNFNSRLESRYSYELMKKASEYSELYGDNLIQLGLEDGIYFYKGMAIGDVFGLARYSDWTISNPECEVIPQDDLIEKMKSFNSSFIVISKRSYANFNPEKYPKFKVLMDTPNGILIAIK</sequence>
<accession>P37790</accession>
<reference key="1">
    <citation type="journal article" date="1994" name="J. Bacteriol.">
        <title>Characterization of the rfc region of Shigella flexneri.</title>
        <authorList>
            <person name="Morona R."/>
            <person name="Mavris M."/>
            <person name="Fallarino A."/>
            <person name="Manning P.A."/>
        </authorList>
    </citation>
    <scope>NUCLEOTIDE SEQUENCE [GENOMIC DNA]</scope>
    <source>
        <strain>PE577 / Serotype 2a</strain>
    </source>
</reference>
<reference key="2">
    <citation type="journal article" date="2002" name="Nucleic Acids Res.">
        <title>Genome sequence of Shigella flexneri 2a: insights into pathogenicity through comparison with genomes of Escherichia coli K12 and O157.</title>
        <authorList>
            <person name="Jin Q."/>
            <person name="Yuan Z."/>
            <person name="Xu J."/>
            <person name="Wang Y."/>
            <person name="Shen Y."/>
            <person name="Lu W."/>
            <person name="Wang J."/>
            <person name="Liu H."/>
            <person name="Yang J."/>
            <person name="Yang F."/>
            <person name="Zhang X."/>
            <person name="Zhang J."/>
            <person name="Yang G."/>
            <person name="Wu H."/>
            <person name="Qu D."/>
            <person name="Dong J."/>
            <person name="Sun L."/>
            <person name="Xue Y."/>
            <person name="Zhao A."/>
            <person name="Gao Y."/>
            <person name="Zhu J."/>
            <person name="Kan B."/>
            <person name="Ding K."/>
            <person name="Chen S."/>
            <person name="Cheng H."/>
            <person name="Yao Z."/>
            <person name="He B."/>
            <person name="Chen R."/>
            <person name="Ma D."/>
            <person name="Qiang B."/>
            <person name="Wen Y."/>
            <person name="Hou Y."/>
            <person name="Yu J."/>
        </authorList>
    </citation>
    <scope>NUCLEOTIDE SEQUENCE [LARGE SCALE GENOMIC DNA]</scope>
    <source>
        <strain>301 / Serotype 2a</strain>
    </source>
</reference>
<reference key="3">
    <citation type="journal article" date="2003" name="Infect. Immun.">
        <title>Complete genome sequence and comparative genomics of Shigella flexneri serotype 2a strain 2457T.</title>
        <authorList>
            <person name="Wei J."/>
            <person name="Goldberg M.B."/>
            <person name="Burland V."/>
            <person name="Venkatesan M.M."/>
            <person name="Deng W."/>
            <person name="Fournier G."/>
            <person name="Mayhew G.F."/>
            <person name="Plunkett G. III"/>
            <person name="Rose D.J."/>
            <person name="Darling A."/>
            <person name="Mau B."/>
            <person name="Perna N.T."/>
            <person name="Payne S.M."/>
            <person name="Runyen-Janecky L.J."/>
            <person name="Zhou S."/>
            <person name="Schwartz D.C."/>
            <person name="Blattner F.R."/>
        </authorList>
    </citation>
    <scope>NUCLEOTIDE SEQUENCE [LARGE SCALE GENOMIC DNA]</scope>
    <source>
        <strain>ATCC 700930 / 2457T / Serotype 2a</strain>
    </source>
</reference>
<dbReference type="EMBL" id="X71970">
    <property type="protein sequence ID" value="CAA50780.1"/>
    <property type="molecule type" value="Genomic_DNA"/>
</dbReference>
<dbReference type="EMBL" id="AE005674">
    <property type="status" value="NOT_ANNOTATED_CDS"/>
    <property type="molecule type" value="Genomic_DNA"/>
</dbReference>
<dbReference type="EMBL" id="AE014073">
    <property type="protein sequence ID" value="AAP17459.1"/>
    <property type="molecule type" value="Genomic_DNA"/>
</dbReference>
<dbReference type="RefSeq" id="WP_011110604.1">
    <property type="nucleotide sequence ID" value="NZ_WPGJ01000095.1"/>
</dbReference>
<dbReference type="KEGG" id="sfx:S2213"/>
<dbReference type="PATRIC" id="fig|623.156.peg.3789"/>
<dbReference type="HOGENOM" id="CLU_2057797_0_0_6"/>
<dbReference type="Proteomes" id="UP000001006">
    <property type="component" value="Chromosome"/>
</dbReference>
<dbReference type="Proteomes" id="UP000002673">
    <property type="component" value="Chromosome"/>
</dbReference>
<feature type="chain" id="PRO_0000066275" description="Uncharacterized protein SF2091.1/S2213">
    <location>
        <begin position="1"/>
        <end position="119"/>
    </location>
</feature>
<gene>
    <name type="ordered locus">SF2091.1</name>
    <name type="ordered locus">S2213</name>
</gene>
<protein>
    <recommendedName>
        <fullName>Uncharacterized protein SF2091.1/S2213</fullName>
    </recommendedName>
    <alternativeName>
        <fullName>ORF12X8</fullName>
    </alternativeName>
</protein>